<name>MLR_DICDI</name>
<gene>
    <name type="primary">mlcR</name>
    <name type="synonym">mlcA</name>
    <name type="ORF">DDB_G0276077</name>
</gene>
<comment type="subunit">
    <text>Myosin is a hexamer of 2 heavy chains and 4 light chains (two regulatory light chains and two essential light chains).</text>
</comment>
<comment type="miscellaneous">
    <text>The sequences of all three RMLC calcium-binding domains have diverged significantly from that of calmodulin. Therefore, it seems unlikely that these light chains bind calcium. It is potential that phosphorylation has taken over the role of calcium-binding in the regulation of Dictyostelium myosin.</text>
</comment>
<comment type="miscellaneous">
    <text>In D.discoideum, cAMP stimulation induces RMLC phosphorylation; this chain is phosphorylated on a serine residue.</text>
</comment>
<reference key="1">
    <citation type="journal article" date="1989" name="Mol. Cell. Biol.">
        <title>Dictyostelium discoideum myosin: isolation and characterization of cDNAs encoding the regulatory light chain.</title>
        <authorList>
            <person name="Tafuri S.R."/>
            <person name="Rushforth A.M."/>
            <person name="Kuczmarski E.R."/>
            <person name="Chisholm R.L."/>
        </authorList>
    </citation>
    <scope>NUCLEOTIDE SEQUENCE [MRNA]</scope>
</reference>
<reference key="2">
    <citation type="journal article" date="2002" name="Nature">
        <title>Sequence and analysis of chromosome 2 of Dictyostelium discoideum.</title>
        <authorList>
            <person name="Gloeckner G."/>
            <person name="Eichinger L."/>
            <person name="Szafranski K."/>
            <person name="Pachebat J.A."/>
            <person name="Bankier A.T."/>
            <person name="Dear P.H."/>
            <person name="Lehmann R."/>
            <person name="Baumgart C."/>
            <person name="Parra G."/>
            <person name="Abril J.F."/>
            <person name="Guigo R."/>
            <person name="Kumpf K."/>
            <person name="Tunggal B."/>
            <person name="Cox E.C."/>
            <person name="Quail M.A."/>
            <person name="Platzer M."/>
            <person name="Rosenthal A."/>
            <person name="Noegel A.A."/>
        </authorList>
    </citation>
    <scope>NUCLEOTIDE SEQUENCE [LARGE SCALE GENOMIC DNA]</scope>
    <source>
        <strain>AX4</strain>
    </source>
</reference>
<reference key="3">
    <citation type="journal article" date="2005" name="Nature">
        <title>The genome of the social amoeba Dictyostelium discoideum.</title>
        <authorList>
            <person name="Eichinger L."/>
            <person name="Pachebat J.A."/>
            <person name="Gloeckner G."/>
            <person name="Rajandream M.A."/>
            <person name="Sucgang R."/>
            <person name="Berriman M."/>
            <person name="Song J."/>
            <person name="Olsen R."/>
            <person name="Szafranski K."/>
            <person name="Xu Q."/>
            <person name="Tunggal B."/>
            <person name="Kummerfeld S."/>
            <person name="Madera M."/>
            <person name="Konfortov B.A."/>
            <person name="Rivero F."/>
            <person name="Bankier A.T."/>
            <person name="Lehmann R."/>
            <person name="Hamlin N."/>
            <person name="Davies R."/>
            <person name="Gaudet P."/>
            <person name="Fey P."/>
            <person name="Pilcher K."/>
            <person name="Chen G."/>
            <person name="Saunders D."/>
            <person name="Sodergren E.J."/>
            <person name="Davis P."/>
            <person name="Kerhornou A."/>
            <person name="Nie X."/>
            <person name="Hall N."/>
            <person name="Anjard C."/>
            <person name="Hemphill L."/>
            <person name="Bason N."/>
            <person name="Farbrother P."/>
            <person name="Desany B."/>
            <person name="Just E."/>
            <person name="Morio T."/>
            <person name="Rost R."/>
            <person name="Churcher C.M."/>
            <person name="Cooper J."/>
            <person name="Haydock S."/>
            <person name="van Driessche N."/>
            <person name="Cronin A."/>
            <person name="Goodhead I."/>
            <person name="Muzny D.M."/>
            <person name="Mourier T."/>
            <person name="Pain A."/>
            <person name="Lu M."/>
            <person name="Harper D."/>
            <person name="Lindsay R."/>
            <person name="Hauser H."/>
            <person name="James K.D."/>
            <person name="Quiles M."/>
            <person name="Madan Babu M."/>
            <person name="Saito T."/>
            <person name="Buchrieser C."/>
            <person name="Wardroper A."/>
            <person name="Felder M."/>
            <person name="Thangavelu M."/>
            <person name="Johnson D."/>
            <person name="Knights A."/>
            <person name="Loulseged H."/>
            <person name="Mungall K.L."/>
            <person name="Oliver K."/>
            <person name="Price C."/>
            <person name="Quail M.A."/>
            <person name="Urushihara H."/>
            <person name="Hernandez J."/>
            <person name="Rabbinowitsch E."/>
            <person name="Steffen D."/>
            <person name="Sanders M."/>
            <person name="Ma J."/>
            <person name="Kohara Y."/>
            <person name="Sharp S."/>
            <person name="Simmonds M.N."/>
            <person name="Spiegler S."/>
            <person name="Tivey A."/>
            <person name="Sugano S."/>
            <person name="White B."/>
            <person name="Walker D."/>
            <person name="Woodward J.R."/>
            <person name="Winckler T."/>
            <person name="Tanaka Y."/>
            <person name="Shaulsky G."/>
            <person name="Schleicher M."/>
            <person name="Weinstock G.M."/>
            <person name="Rosenthal A."/>
            <person name="Cox E.C."/>
            <person name="Chisholm R.L."/>
            <person name="Gibbs R.A."/>
            <person name="Loomis W.F."/>
            <person name="Platzer M."/>
            <person name="Kay R.R."/>
            <person name="Williams J.G."/>
            <person name="Dear P.H."/>
            <person name="Noegel A.A."/>
            <person name="Barrell B.G."/>
            <person name="Kuspa A."/>
        </authorList>
    </citation>
    <scope>NUCLEOTIDE SEQUENCE [LARGE SCALE GENOMIC DNA]</scope>
    <source>
        <strain>AX4</strain>
    </source>
</reference>
<feature type="chain" id="PRO_0000198759" description="Myosin regulatory light chain">
    <location>
        <begin position="1"/>
        <end position="161"/>
    </location>
</feature>
<feature type="domain" description="EF-hand 1" evidence="2">
    <location>
        <begin position="20"/>
        <end position="55"/>
    </location>
</feature>
<feature type="domain" description="EF-hand 2" evidence="2">
    <location>
        <begin position="56"/>
        <end position="91"/>
    </location>
</feature>
<feature type="domain" description="EF-hand 3" evidence="2">
    <location>
        <begin position="93"/>
        <end position="128"/>
    </location>
</feature>
<feature type="modified residue" description="Phosphoserine" evidence="1">
    <location>
        <position position="13"/>
    </location>
</feature>
<feature type="modified residue" description="Phosphoserine" evidence="1">
    <location>
        <position position="14"/>
    </location>
</feature>
<proteinExistence type="evidence at transcript level"/>
<dbReference type="EMBL" id="M25251">
    <property type="protein sequence ID" value="AAA33226.1"/>
    <property type="molecule type" value="mRNA"/>
</dbReference>
<dbReference type="EMBL" id="AAFI02000014">
    <property type="protein sequence ID" value="EAL69338.1"/>
    <property type="molecule type" value="Genomic_DNA"/>
</dbReference>
<dbReference type="PIR" id="A32496">
    <property type="entry name" value="A30938"/>
</dbReference>
<dbReference type="RefSeq" id="XP_643313.1">
    <property type="nucleotide sequence ID" value="XM_638221.1"/>
</dbReference>
<dbReference type="SMR" id="P13833"/>
<dbReference type="FunCoup" id="P13833">
    <property type="interactions" value="4"/>
</dbReference>
<dbReference type="STRING" id="44689.P13833"/>
<dbReference type="PaxDb" id="44689-DDB0185146"/>
<dbReference type="EnsemblProtists" id="EAL69338">
    <property type="protein sequence ID" value="EAL69338"/>
    <property type="gene ID" value="DDB_G0276077"/>
</dbReference>
<dbReference type="GeneID" id="8620359"/>
<dbReference type="KEGG" id="ddi:DDB_G0276077"/>
<dbReference type="dictyBase" id="DDB_G0276077">
    <property type="gene designation" value="mlcR"/>
</dbReference>
<dbReference type="VEuPathDB" id="AmoebaDB:DDB_G0276077"/>
<dbReference type="eggNOG" id="KOG0027">
    <property type="taxonomic scope" value="Eukaryota"/>
</dbReference>
<dbReference type="HOGENOM" id="CLU_061288_2_1_1"/>
<dbReference type="InParanoid" id="P13833"/>
<dbReference type="OMA" id="TICENEQ"/>
<dbReference type="PhylomeDB" id="P13833"/>
<dbReference type="Reactome" id="R-DDI-5627123">
    <property type="pathway name" value="RHO GTPases activate PAKs"/>
</dbReference>
<dbReference type="PRO" id="PR:P13833"/>
<dbReference type="Proteomes" id="UP000002195">
    <property type="component" value="Chromosome 2"/>
</dbReference>
<dbReference type="GO" id="GO:0042641">
    <property type="term" value="C:actomyosin"/>
    <property type="evidence" value="ECO:0000314"/>
    <property type="project" value="dictyBase"/>
</dbReference>
<dbReference type="GO" id="GO:0005737">
    <property type="term" value="C:cytoplasm"/>
    <property type="evidence" value="ECO:0000318"/>
    <property type="project" value="GO_Central"/>
</dbReference>
<dbReference type="GO" id="GO:0016460">
    <property type="term" value="C:myosin II complex"/>
    <property type="evidence" value="ECO:0000314"/>
    <property type="project" value="dictyBase"/>
</dbReference>
<dbReference type="GO" id="GO:0060590">
    <property type="term" value="F:ATPase regulator activity"/>
    <property type="evidence" value="ECO:0000314"/>
    <property type="project" value="dictyBase"/>
</dbReference>
<dbReference type="GO" id="GO:0005509">
    <property type="term" value="F:calcium ion binding"/>
    <property type="evidence" value="ECO:0007669"/>
    <property type="project" value="InterPro"/>
</dbReference>
<dbReference type="GO" id="GO:0140660">
    <property type="term" value="F:cytoskeletal motor activator activity"/>
    <property type="evidence" value="ECO:0000314"/>
    <property type="project" value="dictyBase"/>
</dbReference>
<dbReference type="GO" id="GO:0032036">
    <property type="term" value="F:myosin heavy chain binding"/>
    <property type="evidence" value="ECO:0000314"/>
    <property type="project" value="dictyBase"/>
</dbReference>
<dbReference type="GO" id="GO:0000281">
    <property type="term" value="P:mitotic cytokinesis"/>
    <property type="evidence" value="ECO:0000315"/>
    <property type="project" value="dictyBase"/>
</dbReference>
<dbReference type="GO" id="GO:0031034">
    <property type="term" value="P:myosin filament assembly"/>
    <property type="evidence" value="ECO:0000314"/>
    <property type="project" value="dictyBase"/>
</dbReference>
<dbReference type="GO" id="GO:0031038">
    <property type="term" value="P:myosin II filament organization"/>
    <property type="evidence" value="ECO:0000314"/>
    <property type="project" value="dictyBase"/>
</dbReference>
<dbReference type="GO" id="GO:1903013">
    <property type="term" value="P:response to differentiation-inducing factor 1"/>
    <property type="evidence" value="ECO:0007005"/>
    <property type="project" value="dictyBase"/>
</dbReference>
<dbReference type="GO" id="GO:0030587">
    <property type="term" value="P:sorocarp development"/>
    <property type="evidence" value="ECO:0000315"/>
    <property type="project" value="dictyBase"/>
</dbReference>
<dbReference type="CDD" id="cd00051">
    <property type="entry name" value="EFh"/>
    <property type="match status" value="1"/>
</dbReference>
<dbReference type="FunFam" id="1.10.238.10:FF:000527">
    <property type="entry name" value="Calmodulin-3"/>
    <property type="match status" value="1"/>
</dbReference>
<dbReference type="Gene3D" id="1.10.238.10">
    <property type="entry name" value="EF-hand"/>
    <property type="match status" value="2"/>
</dbReference>
<dbReference type="InterPro" id="IPR011992">
    <property type="entry name" value="EF-hand-dom_pair"/>
</dbReference>
<dbReference type="InterPro" id="IPR002048">
    <property type="entry name" value="EF_hand_dom"/>
</dbReference>
<dbReference type="InterPro" id="IPR050403">
    <property type="entry name" value="Myosin_RLC"/>
</dbReference>
<dbReference type="PANTHER" id="PTHR23049">
    <property type="entry name" value="MYOSIN REGULATORY LIGHT CHAIN 2"/>
    <property type="match status" value="1"/>
</dbReference>
<dbReference type="Pfam" id="PF13499">
    <property type="entry name" value="EF-hand_7"/>
    <property type="match status" value="2"/>
</dbReference>
<dbReference type="SMART" id="SM00054">
    <property type="entry name" value="EFh"/>
    <property type="match status" value="3"/>
</dbReference>
<dbReference type="SUPFAM" id="SSF47473">
    <property type="entry name" value="EF-hand"/>
    <property type="match status" value="1"/>
</dbReference>
<dbReference type="PROSITE" id="PS50222">
    <property type="entry name" value="EF_HAND_2"/>
    <property type="match status" value="3"/>
</dbReference>
<sequence length="161" mass="18323">MASTKRRLNREESSVVLGEEQVAELKEAFELFDKDRTGFIKKDALKTTCKQFGVFVMEDQLDAMFAEADTTKSGAIGFPEFMSMMSRRMKQTSNEQILMNAFKTFDPEGNGYILTKDLSKALTTLGDKLTEAELQELLSISENEQKQVKYDLFVNTLFSKK</sequence>
<protein>
    <recommendedName>
        <fullName>Myosin regulatory light chain</fullName>
    </recommendedName>
    <alternativeName>
        <fullName>RMLC</fullName>
    </alternativeName>
</protein>
<evidence type="ECO:0000255" key="1"/>
<evidence type="ECO:0000255" key="2">
    <source>
        <dbReference type="PROSITE-ProRule" id="PRU00448"/>
    </source>
</evidence>
<accession>P13833</accession>
<accession>Q552B5</accession>
<accession>Q75JL0</accession>
<keyword id="KW-0505">Motor protein</keyword>
<keyword id="KW-0518">Myosin</keyword>
<keyword id="KW-0597">Phosphoprotein</keyword>
<keyword id="KW-1185">Reference proteome</keyword>
<keyword id="KW-0677">Repeat</keyword>
<organism>
    <name type="scientific">Dictyostelium discoideum</name>
    <name type="common">Social amoeba</name>
    <dbReference type="NCBI Taxonomy" id="44689"/>
    <lineage>
        <taxon>Eukaryota</taxon>
        <taxon>Amoebozoa</taxon>
        <taxon>Evosea</taxon>
        <taxon>Eumycetozoa</taxon>
        <taxon>Dictyostelia</taxon>
        <taxon>Dictyosteliales</taxon>
        <taxon>Dictyosteliaceae</taxon>
        <taxon>Dictyostelium</taxon>
    </lineage>
</organism>